<gene>
    <name evidence="1" type="primary">glgC</name>
    <name type="ordered locus">Sde_0990</name>
</gene>
<protein>
    <recommendedName>
        <fullName evidence="1">Glucose-1-phosphate adenylyltransferase</fullName>
        <ecNumber evidence="1">2.7.7.27</ecNumber>
    </recommendedName>
    <alternativeName>
        <fullName evidence="1">ADP-glucose pyrophosphorylase</fullName>
        <shortName evidence="1">ADPGlc PPase</shortName>
    </alternativeName>
    <alternativeName>
        <fullName evidence="1">ADP-glucose synthase</fullName>
    </alternativeName>
</protein>
<evidence type="ECO:0000255" key="1">
    <source>
        <dbReference type="HAMAP-Rule" id="MF_00624"/>
    </source>
</evidence>
<keyword id="KW-0067">ATP-binding</keyword>
<keyword id="KW-0119">Carbohydrate metabolism</keyword>
<keyword id="KW-0320">Glycogen biosynthesis</keyword>
<keyword id="KW-0321">Glycogen metabolism</keyword>
<keyword id="KW-0547">Nucleotide-binding</keyword>
<keyword id="KW-0548">Nucleotidyltransferase</keyword>
<keyword id="KW-1185">Reference proteome</keyword>
<keyword id="KW-0808">Transferase</keyword>
<accession>Q21M27</accession>
<proteinExistence type="inferred from homology"/>
<feature type="chain" id="PRO_0000261896" description="Glucose-1-phosphate adenylyltransferase">
    <location>
        <begin position="1"/>
        <end position="425"/>
    </location>
</feature>
<feature type="binding site" evidence="1">
    <location>
        <position position="109"/>
    </location>
    <ligand>
        <name>alpha-D-glucose 1-phosphate</name>
        <dbReference type="ChEBI" id="CHEBI:58601"/>
    </ligand>
</feature>
<feature type="binding site" evidence="1">
    <location>
        <position position="175"/>
    </location>
    <ligand>
        <name>alpha-D-glucose 1-phosphate</name>
        <dbReference type="ChEBI" id="CHEBI:58601"/>
    </ligand>
</feature>
<feature type="binding site" evidence="1">
    <location>
        <begin position="190"/>
        <end position="191"/>
    </location>
    <ligand>
        <name>alpha-D-glucose 1-phosphate</name>
        <dbReference type="ChEBI" id="CHEBI:58601"/>
    </ligand>
</feature>
<feature type="binding site" evidence="1">
    <location>
        <position position="208"/>
    </location>
    <ligand>
        <name>alpha-D-glucose 1-phosphate</name>
        <dbReference type="ChEBI" id="CHEBI:58601"/>
    </ligand>
</feature>
<name>GLGC_SACD2</name>
<reference key="1">
    <citation type="journal article" date="2008" name="PLoS Genet.">
        <title>Complete genome sequence of the complex carbohydrate-degrading marine bacterium, Saccharophagus degradans strain 2-40 T.</title>
        <authorList>
            <person name="Weiner R.M."/>
            <person name="Taylor L.E. II"/>
            <person name="Henrissat B."/>
            <person name="Hauser L."/>
            <person name="Land M."/>
            <person name="Coutinho P.M."/>
            <person name="Rancurel C."/>
            <person name="Saunders E.H."/>
            <person name="Longmire A.G."/>
            <person name="Zhang H."/>
            <person name="Bayer E.A."/>
            <person name="Gilbert H.J."/>
            <person name="Larimer F."/>
            <person name="Zhulin I.B."/>
            <person name="Ekborg N.A."/>
            <person name="Lamed R."/>
            <person name="Richardson P.M."/>
            <person name="Borovok I."/>
            <person name="Hutcheson S."/>
        </authorList>
    </citation>
    <scope>NUCLEOTIDE SEQUENCE [LARGE SCALE GENOMIC DNA]</scope>
    <source>
        <strain>2-40 / ATCC 43961 / DSM 17024</strain>
    </source>
</reference>
<organism>
    <name type="scientific">Saccharophagus degradans (strain 2-40 / ATCC 43961 / DSM 17024)</name>
    <dbReference type="NCBI Taxonomy" id="203122"/>
    <lineage>
        <taxon>Bacteria</taxon>
        <taxon>Pseudomonadati</taxon>
        <taxon>Pseudomonadota</taxon>
        <taxon>Gammaproteobacteria</taxon>
        <taxon>Cellvibrionales</taxon>
        <taxon>Cellvibrionaceae</taxon>
        <taxon>Saccharophagus</taxon>
    </lineage>
</organism>
<sequence>MLDPNSRYVSRLTRDTVALVLAGGRGSRLHELTDWRAKPALHFGGKFRIIDFPLSNCVNSGIRRIGILTQYKAHSLIRHVIRGWSSFKKEFGEYVEILPASQRYSPNWYQGTADAIYQNLDILQAEAPKYILVLSGDHVYQMDYGAIIAHHVETGADLTVSCIEVPIEEAAGSFGVMTVDDDNRIIRFDEKPQRPTELANKPGYTLASMGNYVFNTEFLFDQLRKDAADPDSEHDFGKNIIPNIIAEKLVSAYRFRDHDTNETAYWRDVGTLDSFWEANMELVSPNPSLNLYNHDWPIWTYQTQLPPAKFVFDDDSRRGYAVDSMVSGGCIVSGGKVKSSLLFSDVHIHSYAEIEESVLLPEVEVHRSAKIKKAIIDSACVIPEGMIIGHDHEHDKARGFRVTKKGVTLVTREMLGQQPAGTSAK</sequence>
<dbReference type="EC" id="2.7.7.27" evidence="1"/>
<dbReference type="EMBL" id="CP000282">
    <property type="protein sequence ID" value="ABD80252.1"/>
    <property type="molecule type" value="Genomic_DNA"/>
</dbReference>
<dbReference type="RefSeq" id="WP_011467472.1">
    <property type="nucleotide sequence ID" value="NC_007912.1"/>
</dbReference>
<dbReference type="SMR" id="Q21M27"/>
<dbReference type="STRING" id="203122.Sde_0990"/>
<dbReference type="GeneID" id="98612674"/>
<dbReference type="KEGG" id="sde:Sde_0990"/>
<dbReference type="eggNOG" id="COG0448">
    <property type="taxonomic scope" value="Bacteria"/>
</dbReference>
<dbReference type="HOGENOM" id="CLU_029499_14_1_6"/>
<dbReference type="OrthoDB" id="9801810at2"/>
<dbReference type="UniPathway" id="UPA00164"/>
<dbReference type="Proteomes" id="UP000001947">
    <property type="component" value="Chromosome"/>
</dbReference>
<dbReference type="GO" id="GO:0005524">
    <property type="term" value="F:ATP binding"/>
    <property type="evidence" value="ECO:0007669"/>
    <property type="project" value="UniProtKB-KW"/>
</dbReference>
<dbReference type="GO" id="GO:0008878">
    <property type="term" value="F:glucose-1-phosphate adenylyltransferase activity"/>
    <property type="evidence" value="ECO:0007669"/>
    <property type="project" value="UniProtKB-UniRule"/>
</dbReference>
<dbReference type="GO" id="GO:0005978">
    <property type="term" value="P:glycogen biosynthetic process"/>
    <property type="evidence" value="ECO:0007669"/>
    <property type="project" value="UniProtKB-UniRule"/>
</dbReference>
<dbReference type="CDD" id="cd02508">
    <property type="entry name" value="ADP_Glucose_PP"/>
    <property type="match status" value="1"/>
</dbReference>
<dbReference type="CDD" id="cd04651">
    <property type="entry name" value="LbH_G1P_AT_C"/>
    <property type="match status" value="1"/>
</dbReference>
<dbReference type="Gene3D" id="2.160.10.10">
    <property type="entry name" value="Hexapeptide repeat proteins"/>
    <property type="match status" value="1"/>
</dbReference>
<dbReference type="Gene3D" id="3.90.550.10">
    <property type="entry name" value="Spore Coat Polysaccharide Biosynthesis Protein SpsA, Chain A"/>
    <property type="match status" value="1"/>
</dbReference>
<dbReference type="HAMAP" id="MF_00624">
    <property type="entry name" value="GlgC"/>
    <property type="match status" value="1"/>
</dbReference>
<dbReference type="InterPro" id="IPR011831">
    <property type="entry name" value="ADP-Glc_PPase"/>
</dbReference>
<dbReference type="InterPro" id="IPR005836">
    <property type="entry name" value="ADP_Glu_pyroP_CS"/>
</dbReference>
<dbReference type="InterPro" id="IPR023049">
    <property type="entry name" value="GlgC_bac"/>
</dbReference>
<dbReference type="InterPro" id="IPR056818">
    <property type="entry name" value="GlmU/GlgC-like_hexapep"/>
</dbReference>
<dbReference type="InterPro" id="IPR005835">
    <property type="entry name" value="NTP_transferase_dom"/>
</dbReference>
<dbReference type="InterPro" id="IPR029044">
    <property type="entry name" value="Nucleotide-diphossugar_trans"/>
</dbReference>
<dbReference type="InterPro" id="IPR011004">
    <property type="entry name" value="Trimer_LpxA-like_sf"/>
</dbReference>
<dbReference type="NCBIfam" id="TIGR02091">
    <property type="entry name" value="glgC"/>
    <property type="match status" value="1"/>
</dbReference>
<dbReference type="NCBIfam" id="NF001947">
    <property type="entry name" value="PRK00725.1"/>
    <property type="match status" value="1"/>
</dbReference>
<dbReference type="NCBIfam" id="NF002023">
    <property type="entry name" value="PRK00844.1"/>
    <property type="match status" value="1"/>
</dbReference>
<dbReference type="PANTHER" id="PTHR43523:SF2">
    <property type="entry name" value="GLUCOSE-1-PHOSPHATE ADENYLYLTRANSFERASE"/>
    <property type="match status" value="1"/>
</dbReference>
<dbReference type="PANTHER" id="PTHR43523">
    <property type="entry name" value="GLUCOSE-1-PHOSPHATE ADENYLYLTRANSFERASE-RELATED"/>
    <property type="match status" value="1"/>
</dbReference>
<dbReference type="Pfam" id="PF24894">
    <property type="entry name" value="Hexapep_GlmU"/>
    <property type="match status" value="1"/>
</dbReference>
<dbReference type="Pfam" id="PF00483">
    <property type="entry name" value="NTP_transferase"/>
    <property type="match status" value="1"/>
</dbReference>
<dbReference type="SUPFAM" id="SSF53448">
    <property type="entry name" value="Nucleotide-diphospho-sugar transferases"/>
    <property type="match status" value="1"/>
</dbReference>
<dbReference type="SUPFAM" id="SSF51161">
    <property type="entry name" value="Trimeric LpxA-like enzymes"/>
    <property type="match status" value="1"/>
</dbReference>
<dbReference type="PROSITE" id="PS00808">
    <property type="entry name" value="ADP_GLC_PYROPHOSPH_1"/>
    <property type="match status" value="1"/>
</dbReference>
<dbReference type="PROSITE" id="PS00809">
    <property type="entry name" value="ADP_GLC_PYROPHOSPH_2"/>
    <property type="match status" value="1"/>
</dbReference>
<dbReference type="PROSITE" id="PS00810">
    <property type="entry name" value="ADP_GLC_PYROPHOSPH_3"/>
    <property type="match status" value="1"/>
</dbReference>
<comment type="function">
    <text evidence="1">Involved in the biosynthesis of ADP-glucose, a building block required for the elongation reactions to produce glycogen. Catalyzes the reaction between ATP and alpha-D-glucose 1-phosphate (G1P) to produce pyrophosphate and ADP-Glc.</text>
</comment>
<comment type="catalytic activity">
    <reaction evidence="1">
        <text>alpha-D-glucose 1-phosphate + ATP + H(+) = ADP-alpha-D-glucose + diphosphate</text>
        <dbReference type="Rhea" id="RHEA:12120"/>
        <dbReference type="ChEBI" id="CHEBI:15378"/>
        <dbReference type="ChEBI" id="CHEBI:30616"/>
        <dbReference type="ChEBI" id="CHEBI:33019"/>
        <dbReference type="ChEBI" id="CHEBI:57498"/>
        <dbReference type="ChEBI" id="CHEBI:58601"/>
        <dbReference type="EC" id="2.7.7.27"/>
    </reaction>
</comment>
<comment type="pathway">
    <text evidence="1">Glycan biosynthesis; glycogen biosynthesis.</text>
</comment>
<comment type="subunit">
    <text evidence="1">Homotetramer.</text>
</comment>
<comment type="similarity">
    <text evidence="1">Belongs to the bacterial/plant glucose-1-phosphate adenylyltransferase family.</text>
</comment>